<evidence type="ECO:0000255" key="1">
    <source>
        <dbReference type="HAMAP-Rule" id="MF_00685"/>
    </source>
</evidence>
<gene>
    <name evidence="1" type="primary">glgB</name>
    <name type="ordered locus">CAB262</name>
</gene>
<comment type="function">
    <text evidence="1">Catalyzes the formation of the alpha-1,6-glucosidic linkages in glycogen by scission of a 1,4-alpha-linked oligosaccharide from growing alpha-1,4-glucan chains and the subsequent attachment of the oligosaccharide to the alpha-1,6 position.</text>
</comment>
<comment type="catalytic activity">
    <reaction evidence="1">
        <text>Transfers a segment of a (1-&gt;4)-alpha-D-glucan chain to a primary hydroxy group in a similar glucan chain.</text>
        <dbReference type="EC" id="2.4.1.18"/>
    </reaction>
</comment>
<comment type="pathway">
    <text evidence="1">Glycan biosynthesis; glycogen biosynthesis.</text>
</comment>
<comment type="subunit">
    <text evidence="1">Monomer.</text>
</comment>
<comment type="similarity">
    <text evidence="1">Belongs to the glycosyl hydrolase 13 family. GlgB subfamily.</text>
</comment>
<protein>
    <recommendedName>
        <fullName evidence="1">1,4-alpha-glucan branching enzyme GlgB</fullName>
        <ecNumber evidence="1">2.4.1.18</ecNumber>
    </recommendedName>
    <alternativeName>
        <fullName evidence="1">1,4-alpha-D-glucan:1,4-alpha-D-glucan 6-glucosyl-transferase</fullName>
    </alternativeName>
    <alternativeName>
        <fullName evidence="1">Alpha-(1-&gt;4)-glucan branching enzyme</fullName>
    </alternativeName>
    <alternativeName>
        <fullName evidence="1">Glycogen branching enzyme</fullName>
        <shortName evidence="1">BE</shortName>
    </alternativeName>
</protein>
<dbReference type="EC" id="2.4.1.18" evidence="1"/>
<dbReference type="EMBL" id="CR848038">
    <property type="protein sequence ID" value="CAH63718.1"/>
    <property type="molecule type" value="Genomic_DNA"/>
</dbReference>
<dbReference type="RefSeq" id="WP_011096942.1">
    <property type="nucleotide sequence ID" value="NC_004552.2"/>
</dbReference>
<dbReference type="SMR" id="Q5L6K4"/>
<dbReference type="CAZy" id="CBM48">
    <property type="family name" value="Carbohydrate-Binding Module Family 48"/>
</dbReference>
<dbReference type="CAZy" id="GH13">
    <property type="family name" value="Glycoside Hydrolase Family 13"/>
</dbReference>
<dbReference type="KEGG" id="cab:CAB262"/>
<dbReference type="eggNOG" id="COG0296">
    <property type="taxonomic scope" value="Bacteria"/>
</dbReference>
<dbReference type="HOGENOM" id="CLU_004245_3_2_0"/>
<dbReference type="OrthoDB" id="9800174at2"/>
<dbReference type="UniPathway" id="UPA00164"/>
<dbReference type="Proteomes" id="UP000001012">
    <property type="component" value="Chromosome"/>
</dbReference>
<dbReference type="GO" id="GO:0005829">
    <property type="term" value="C:cytosol"/>
    <property type="evidence" value="ECO:0007669"/>
    <property type="project" value="TreeGrafter"/>
</dbReference>
<dbReference type="GO" id="GO:0003844">
    <property type="term" value="F:1,4-alpha-glucan branching enzyme activity"/>
    <property type="evidence" value="ECO:0007669"/>
    <property type="project" value="UniProtKB-UniRule"/>
</dbReference>
<dbReference type="GO" id="GO:0043169">
    <property type="term" value="F:cation binding"/>
    <property type="evidence" value="ECO:0007669"/>
    <property type="project" value="InterPro"/>
</dbReference>
<dbReference type="GO" id="GO:0004553">
    <property type="term" value="F:hydrolase activity, hydrolyzing O-glycosyl compounds"/>
    <property type="evidence" value="ECO:0007669"/>
    <property type="project" value="InterPro"/>
</dbReference>
<dbReference type="GO" id="GO:0005978">
    <property type="term" value="P:glycogen biosynthetic process"/>
    <property type="evidence" value="ECO:0007669"/>
    <property type="project" value="UniProtKB-UniRule"/>
</dbReference>
<dbReference type="CDD" id="cd11322">
    <property type="entry name" value="AmyAc_Glg_BE"/>
    <property type="match status" value="1"/>
</dbReference>
<dbReference type="CDD" id="cd02855">
    <property type="entry name" value="E_set_GBE_prok_N"/>
    <property type="match status" value="1"/>
</dbReference>
<dbReference type="FunFam" id="2.60.40.10:FF:000169">
    <property type="entry name" value="1,4-alpha-glucan branching enzyme GlgB"/>
    <property type="match status" value="1"/>
</dbReference>
<dbReference type="FunFam" id="3.20.20.80:FF:000003">
    <property type="entry name" value="1,4-alpha-glucan branching enzyme GlgB"/>
    <property type="match status" value="1"/>
</dbReference>
<dbReference type="Gene3D" id="3.20.20.80">
    <property type="entry name" value="Glycosidases"/>
    <property type="match status" value="1"/>
</dbReference>
<dbReference type="Gene3D" id="2.60.40.1180">
    <property type="entry name" value="Golgi alpha-mannosidase II"/>
    <property type="match status" value="1"/>
</dbReference>
<dbReference type="Gene3D" id="2.60.40.10">
    <property type="entry name" value="Immunoglobulins"/>
    <property type="match status" value="2"/>
</dbReference>
<dbReference type="HAMAP" id="MF_00685">
    <property type="entry name" value="GlgB"/>
    <property type="match status" value="1"/>
</dbReference>
<dbReference type="InterPro" id="IPR006048">
    <property type="entry name" value="A-amylase/branching_C"/>
</dbReference>
<dbReference type="InterPro" id="IPR037439">
    <property type="entry name" value="Branching_enzy"/>
</dbReference>
<dbReference type="InterPro" id="IPR006407">
    <property type="entry name" value="GlgB"/>
</dbReference>
<dbReference type="InterPro" id="IPR054169">
    <property type="entry name" value="GlgB_N"/>
</dbReference>
<dbReference type="InterPro" id="IPR044143">
    <property type="entry name" value="GlgB_N_E_set_prok"/>
</dbReference>
<dbReference type="InterPro" id="IPR006047">
    <property type="entry name" value="Glyco_hydro_13_cat_dom"/>
</dbReference>
<dbReference type="InterPro" id="IPR004193">
    <property type="entry name" value="Glyco_hydro_13_N"/>
</dbReference>
<dbReference type="InterPro" id="IPR013780">
    <property type="entry name" value="Glyco_hydro_b"/>
</dbReference>
<dbReference type="InterPro" id="IPR017853">
    <property type="entry name" value="Glycoside_hydrolase_SF"/>
</dbReference>
<dbReference type="InterPro" id="IPR013783">
    <property type="entry name" value="Ig-like_fold"/>
</dbReference>
<dbReference type="InterPro" id="IPR014756">
    <property type="entry name" value="Ig_E-set"/>
</dbReference>
<dbReference type="NCBIfam" id="TIGR01515">
    <property type="entry name" value="branching_enzym"/>
    <property type="match status" value="1"/>
</dbReference>
<dbReference type="NCBIfam" id="NF003811">
    <property type="entry name" value="PRK05402.1"/>
    <property type="match status" value="1"/>
</dbReference>
<dbReference type="NCBIfam" id="NF008967">
    <property type="entry name" value="PRK12313.1"/>
    <property type="match status" value="1"/>
</dbReference>
<dbReference type="PANTHER" id="PTHR43651">
    <property type="entry name" value="1,4-ALPHA-GLUCAN-BRANCHING ENZYME"/>
    <property type="match status" value="1"/>
</dbReference>
<dbReference type="PANTHER" id="PTHR43651:SF3">
    <property type="entry name" value="1,4-ALPHA-GLUCAN-BRANCHING ENZYME"/>
    <property type="match status" value="1"/>
</dbReference>
<dbReference type="Pfam" id="PF00128">
    <property type="entry name" value="Alpha-amylase"/>
    <property type="match status" value="1"/>
</dbReference>
<dbReference type="Pfam" id="PF02806">
    <property type="entry name" value="Alpha-amylase_C"/>
    <property type="match status" value="1"/>
</dbReference>
<dbReference type="Pfam" id="PF02922">
    <property type="entry name" value="CBM_48"/>
    <property type="match status" value="1"/>
</dbReference>
<dbReference type="Pfam" id="PF22019">
    <property type="entry name" value="GlgB_N"/>
    <property type="match status" value="1"/>
</dbReference>
<dbReference type="PIRSF" id="PIRSF000463">
    <property type="entry name" value="GlgB"/>
    <property type="match status" value="1"/>
</dbReference>
<dbReference type="SMART" id="SM00642">
    <property type="entry name" value="Aamy"/>
    <property type="match status" value="1"/>
</dbReference>
<dbReference type="SUPFAM" id="SSF51445">
    <property type="entry name" value="(Trans)glycosidases"/>
    <property type="match status" value="1"/>
</dbReference>
<dbReference type="SUPFAM" id="SSF81296">
    <property type="entry name" value="E set domains"/>
    <property type="match status" value="2"/>
</dbReference>
<dbReference type="SUPFAM" id="SSF51011">
    <property type="entry name" value="Glycosyl hydrolase domain"/>
    <property type="match status" value="1"/>
</dbReference>
<proteinExistence type="inferred from homology"/>
<accession>Q5L6K4</accession>
<keyword id="KW-0119">Carbohydrate metabolism</keyword>
<keyword id="KW-0320">Glycogen biosynthesis</keyword>
<keyword id="KW-0321">Glycogen metabolism</keyword>
<keyword id="KW-0328">Glycosyltransferase</keyword>
<keyword id="KW-0808">Transferase</keyword>
<feature type="chain" id="PRO_0000260643" description="1,4-alpha-glucan branching enzyme GlgB">
    <location>
        <begin position="1"/>
        <end position="721"/>
    </location>
</feature>
<feature type="active site" description="Nucleophile" evidence="1">
    <location>
        <position position="400"/>
    </location>
</feature>
<feature type="active site" description="Proton donor" evidence="1">
    <location>
        <position position="453"/>
    </location>
</feature>
<reference key="1">
    <citation type="journal article" date="2005" name="Genome Res.">
        <title>The Chlamydophila abortus genome sequence reveals an array of variable proteins that contribute to interspecies variation.</title>
        <authorList>
            <person name="Thomson N.R."/>
            <person name="Yeats C."/>
            <person name="Bell K."/>
            <person name="Holden M.T.G."/>
            <person name="Bentley S.D."/>
            <person name="Livingstone M."/>
            <person name="Cerdeno-Tarraga A.-M."/>
            <person name="Harris B."/>
            <person name="Doggett J."/>
            <person name="Ormond D."/>
            <person name="Mungall K."/>
            <person name="Clarke K."/>
            <person name="Feltwell T."/>
            <person name="Hance Z."/>
            <person name="Sanders M."/>
            <person name="Quail M.A."/>
            <person name="Price C."/>
            <person name="Barrell B.G."/>
            <person name="Parkhill J."/>
            <person name="Longbottom D."/>
        </authorList>
    </citation>
    <scope>NUCLEOTIDE SEQUENCE [LARGE SCALE GENOMIC DNA]</scope>
    <source>
        <strain>DSM 27085 / S26/3</strain>
    </source>
</reference>
<name>GLGB_CHLAB</name>
<sequence>MVERIVNSEDVSLLVSGRQSNPHKFLGIVSENSSQDRIILFRPGAHSVVVELQGNIAHAQHHHSGIFSLTAPKGTLPQDYRIYHQNGLLAHDPYAFPPLWGEVDSFLFHQGTHYKIYECMGAIPYNVQGISGVLFVVWAPHAQRVSVVGDFNFWNGLVNPLRKVSDLGVWELFIPGLEEGTLYKWEIVSASGEVLIKTDPYGKRFDVPPHAPSRVVDSDRYTWHDAAWMEKRKHRGDQPLAIYEVHVGSWQWHEGKPLGYRELAKKLAAYCKEMHYTHVELLPVTEHPLNESWGYQVTGYYAPTCRYGTPEDFQFFVDHLHRENIGVILDWVPGHFPTDGFALAHFDGEALYESIENHEPLHPHWRTYTFDYRCNEVVNFLLGSALFWLDKMHIDGLRVDAVTSMLYLDYGRQEGEWSPNIYGGRENLQAIEFIKHLNSVVHREFPGVLTFAEESTDFPKVTQAVAQGGLGFDYKWNLGWMHDTFRYIQVDPLFRSYHHKDLTFSLWYAFNERYLLPLSHDEVVHGKGSLLQKMPGDTWTKFAHMRLLLSYHICQPGKKLLFMGGEFAQGKEWTPDSPLDWHLLDHPDHAYLHKCVARMNALYCDLPYFWKGDGKQGSFRWVDFKDTENHVIAYYRFSGEDRSSALLCVHHFSSGYFPSYVLYCQDIHSCQLLFNSDDCCFGGSGKGNRQPVLCLDQHVSWGIDIELPPLATLIFHVDFVN</sequence>
<organism>
    <name type="scientific">Chlamydia abortus (strain DSM 27085 / S26/3)</name>
    <name type="common">Chlamydophila abortus</name>
    <dbReference type="NCBI Taxonomy" id="218497"/>
    <lineage>
        <taxon>Bacteria</taxon>
        <taxon>Pseudomonadati</taxon>
        <taxon>Chlamydiota</taxon>
        <taxon>Chlamydiia</taxon>
        <taxon>Chlamydiales</taxon>
        <taxon>Chlamydiaceae</taxon>
        <taxon>Chlamydia/Chlamydophila group</taxon>
        <taxon>Chlamydia</taxon>
    </lineage>
</organism>